<organism>
    <name type="scientific">Drosophila melanogaster</name>
    <name type="common">Fruit fly</name>
    <dbReference type="NCBI Taxonomy" id="7227"/>
    <lineage>
        <taxon>Eukaryota</taxon>
        <taxon>Metazoa</taxon>
        <taxon>Ecdysozoa</taxon>
        <taxon>Arthropoda</taxon>
        <taxon>Hexapoda</taxon>
        <taxon>Insecta</taxon>
        <taxon>Pterygota</taxon>
        <taxon>Neoptera</taxon>
        <taxon>Endopterygota</taxon>
        <taxon>Diptera</taxon>
        <taxon>Brachycera</taxon>
        <taxon>Muscomorpha</taxon>
        <taxon>Ephydroidea</taxon>
        <taxon>Drosophilidae</taxon>
        <taxon>Drosophila</taxon>
        <taxon>Sophophora</taxon>
    </lineage>
</organism>
<name>RHOL_DROME</name>
<evidence type="ECO:0000250" key="1"/>
<evidence type="ECO:0000255" key="2"/>
<evidence type="ECO:0000269" key="3">
    <source>
    </source>
</evidence>
<evidence type="ECO:0000269" key="4">
    <source>
    </source>
</evidence>
<evidence type="ECO:0000305" key="5"/>
<reference key="1">
    <citation type="journal article" date="1996" name="J. Cell Biol.">
        <title>Cell type-specific roles for Cdc42, Rac, and RhoL in Drosophila oogenesis.</title>
        <authorList>
            <person name="Murphy A.M."/>
            <person name="Montell D.J."/>
        </authorList>
    </citation>
    <scope>NUCLEOTIDE SEQUENCE [MRNA]</scope>
    <scope>DEVELOPMENTAL STAGE</scope>
</reference>
<reference key="2">
    <citation type="journal article" date="1997" name="Mol. Gen. Genet.">
        <title>Molecular cloning and characterization of Drosophila genes encoding small GTPases of the rab and rho families.</title>
        <authorList>
            <person name="Sasamura T."/>
            <person name="Kobayashi T."/>
            <person name="Kojima S."/>
            <person name="Qadota H."/>
            <person name="Ohya Y."/>
            <person name="Masai I."/>
            <person name="Hotta Y."/>
        </authorList>
    </citation>
    <scope>NUCLEOTIDE SEQUENCE [MRNA]</scope>
    <scope>FUNCTION</scope>
    <scope>TISSUE SPECIFICITY</scope>
    <scope>DISRUPTION PHENOTYPE</scope>
    <source>
        <tissue>Embryo</tissue>
    </source>
</reference>
<reference key="3">
    <citation type="journal article" date="2000" name="Science">
        <title>The genome sequence of Drosophila melanogaster.</title>
        <authorList>
            <person name="Adams M.D."/>
            <person name="Celniker S.E."/>
            <person name="Holt R.A."/>
            <person name="Evans C.A."/>
            <person name="Gocayne J.D."/>
            <person name="Amanatides P.G."/>
            <person name="Scherer S.E."/>
            <person name="Li P.W."/>
            <person name="Hoskins R.A."/>
            <person name="Galle R.F."/>
            <person name="George R.A."/>
            <person name="Lewis S.E."/>
            <person name="Richards S."/>
            <person name="Ashburner M."/>
            <person name="Henderson S.N."/>
            <person name="Sutton G.G."/>
            <person name="Wortman J.R."/>
            <person name="Yandell M.D."/>
            <person name="Zhang Q."/>
            <person name="Chen L.X."/>
            <person name="Brandon R.C."/>
            <person name="Rogers Y.-H.C."/>
            <person name="Blazej R.G."/>
            <person name="Champe M."/>
            <person name="Pfeiffer B.D."/>
            <person name="Wan K.H."/>
            <person name="Doyle C."/>
            <person name="Baxter E.G."/>
            <person name="Helt G."/>
            <person name="Nelson C.R."/>
            <person name="Miklos G.L.G."/>
            <person name="Abril J.F."/>
            <person name="Agbayani A."/>
            <person name="An H.-J."/>
            <person name="Andrews-Pfannkoch C."/>
            <person name="Baldwin D."/>
            <person name="Ballew R.M."/>
            <person name="Basu A."/>
            <person name="Baxendale J."/>
            <person name="Bayraktaroglu L."/>
            <person name="Beasley E.M."/>
            <person name="Beeson K.Y."/>
            <person name="Benos P.V."/>
            <person name="Berman B.P."/>
            <person name="Bhandari D."/>
            <person name="Bolshakov S."/>
            <person name="Borkova D."/>
            <person name="Botchan M.R."/>
            <person name="Bouck J."/>
            <person name="Brokstein P."/>
            <person name="Brottier P."/>
            <person name="Burtis K.C."/>
            <person name="Busam D.A."/>
            <person name="Butler H."/>
            <person name="Cadieu E."/>
            <person name="Center A."/>
            <person name="Chandra I."/>
            <person name="Cherry J.M."/>
            <person name="Cawley S."/>
            <person name="Dahlke C."/>
            <person name="Davenport L.B."/>
            <person name="Davies P."/>
            <person name="de Pablos B."/>
            <person name="Delcher A."/>
            <person name="Deng Z."/>
            <person name="Mays A.D."/>
            <person name="Dew I."/>
            <person name="Dietz S.M."/>
            <person name="Dodson K."/>
            <person name="Doup L.E."/>
            <person name="Downes M."/>
            <person name="Dugan-Rocha S."/>
            <person name="Dunkov B.C."/>
            <person name="Dunn P."/>
            <person name="Durbin K.J."/>
            <person name="Evangelista C.C."/>
            <person name="Ferraz C."/>
            <person name="Ferriera S."/>
            <person name="Fleischmann W."/>
            <person name="Fosler C."/>
            <person name="Gabrielian A.E."/>
            <person name="Garg N.S."/>
            <person name="Gelbart W.M."/>
            <person name="Glasser K."/>
            <person name="Glodek A."/>
            <person name="Gong F."/>
            <person name="Gorrell J.H."/>
            <person name="Gu Z."/>
            <person name="Guan P."/>
            <person name="Harris M."/>
            <person name="Harris N.L."/>
            <person name="Harvey D.A."/>
            <person name="Heiman T.J."/>
            <person name="Hernandez J.R."/>
            <person name="Houck J."/>
            <person name="Hostin D."/>
            <person name="Houston K.A."/>
            <person name="Howland T.J."/>
            <person name="Wei M.-H."/>
            <person name="Ibegwam C."/>
            <person name="Jalali M."/>
            <person name="Kalush F."/>
            <person name="Karpen G.H."/>
            <person name="Ke Z."/>
            <person name="Kennison J.A."/>
            <person name="Ketchum K.A."/>
            <person name="Kimmel B.E."/>
            <person name="Kodira C.D."/>
            <person name="Kraft C.L."/>
            <person name="Kravitz S."/>
            <person name="Kulp D."/>
            <person name="Lai Z."/>
            <person name="Lasko P."/>
            <person name="Lei Y."/>
            <person name="Levitsky A.A."/>
            <person name="Li J.H."/>
            <person name="Li Z."/>
            <person name="Liang Y."/>
            <person name="Lin X."/>
            <person name="Liu X."/>
            <person name="Mattei B."/>
            <person name="McIntosh T.C."/>
            <person name="McLeod M.P."/>
            <person name="McPherson D."/>
            <person name="Merkulov G."/>
            <person name="Milshina N.V."/>
            <person name="Mobarry C."/>
            <person name="Morris J."/>
            <person name="Moshrefi A."/>
            <person name="Mount S.M."/>
            <person name="Moy M."/>
            <person name="Murphy B."/>
            <person name="Murphy L."/>
            <person name="Muzny D.M."/>
            <person name="Nelson D.L."/>
            <person name="Nelson D.R."/>
            <person name="Nelson K.A."/>
            <person name="Nixon K."/>
            <person name="Nusskern D.R."/>
            <person name="Pacleb J.M."/>
            <person name="Palazzolo M."/>
            <person name="Pittman G.S."/>
            <person name="Pan S."/>
            <person name="Pollard J."/>
            <person name="Puri V."/>
            <person name="Reese M.G."/>
            <person name="Reinert K."/>
            <person name="Remington K."/>
            <person name="Saunders R.D.C."/>
            <person name="Scheeler F."/>
            <person name="Shen H."/>
            <person name="Shue B.C."/>
            <person name="Siden-Kiamos I."/>
            <person name="Simpson M."/>
            <person name="Skupski M.P."/>
            <person name="Smith T.J."/>
            <person name="Spier E."/>
            <person name="Spradling A.C."/>
            <person name="Stapleton M."/>
            <person name="Strong R."/>
            <person name="Sun E."/>
            <person name="Svirskas R."/>
            <person name="Tector C."/>
            <person name="Turner R."/>
            <person name="Venter E."/>
            <person name="Wang A.H."/>
            <person name="Wang X."/>
            <person name="Wang Z.-Y."/>
            <person name="Wassarman D.A."/>
            <person name="Weinstock G.M."/>
            <person name="Weissenbach J."/>
            <person name="Williams S.M."/>
            <person name="Woodage T."/>
            <person name="Worley K.C."/>
            <person name="Wu D."/>
            <person name="Yang S."/>
            <person name="Yao Q.A."/>
            <person name="Ye J."/>
            <person name="Yeh R.-F."/>
            <person name="Zaveri J.S."/>
            <person name="Zhan M."/>
            <person name="Zhang G."/>
            <person name="Zhao Q."/>
            <person name="Zheng L."/>
            <person name="Zheng X.H."/>
            <person name="Zhong F.N."/>
            <person name="Zhong W."/>
            <person name="Zhou X."/>
            <person name="Zhu S.C."/>
            <person name="Zhu X."/>
            <person name="Smith H.O."/>
            <person name="Gibbs R.A."/>
            <person name="Myers E.W."/>
            <person name="Rubin G.M."/>
            <person name="Venter J.C."/>
        </authorList>
    </citation>
    <scope>NUCLEOTIDE SEQUENCE [LARGE SCALE GENOMIC DNA]</scope>
    <source>
        <strain>Berkeley</strain>
    </source>
</reference>
<reference key="4">
    <citation type="journal article" date="2002" name="Genome Biol.">
        <title>Annotation of the Drosophila melanogaster euchromatic genome: a systematic review.</title>
        <authorList>
            <person name="Misra S."/>
            <person name="Crosby M.A."/>
            <person name="Mungall C.J."/>
            <person name="Matthews B.B."/>
            <person name="Campbell K.S."/>
            <person name="Hradecky P."/>
            <person name="Huang Y."/>
            <person name="Kaminker J.S."/>
            <person name="Millburn G.H."/>
            <person name="Prochnik S.E."/>
            <person name="Smith C.D."/>
            <person name="Tupy J.L."/>
            <person name="Whitfield E.J."/>
            <person name="Bayraktaroglu L."/>
            <person name="Berman B.P."/>
            <person name="Bettencourt B.R."/>
            <person name="Celniker S.E."/>
            <person name="de Grey A.D.N.J."/>
            <person name="Drysdale R.A."/>
            <person name="Harris N.L."/>
            <person name="Richter J."/>
            <person name="Russo S."/>
            <person name="Schroeder A.J."/>
            <person name="Shu S.Q."/>
            <person name="Stapleton M."/>
            <person name="Yamada C."/>
            <person name="Ashburner M."/>
            <person name="Gelbart W.M."/>
            <person name="Rubin G.M."/>
            <person name="Lewis S.E."/>
        </authorList>
    </citation>
    <scope>GENOME REANNOTATION</scope>
    <source>
        <strain>Berkeley</strain>
    </source>
</reference>
<reference key="5">
    <citation type="submission" date="2003-02" db="EMBL/GenBank/DDBJ databases">
        <authorList>
            <person name="Stapleton M."/>
            <person name="Brokstein P."/>
            <person name="Hong L."/>
            <person name="Agbayani A."/>
            <person name="Carlson J.W."/>
            <person name="Champe M."/>
            <person name="Chavez C."/>
            <person name="Dorsett V."/>
            <person name="Dresnek D."/>
            <person name="Farfan D."/>
            <person name="Frise E."/>
            <person name="George R.A."/>
            <person name="Gonzalez M."/>
            <person name="Guarin H."/>
            <person name="Kronmiller B."/>
            <person name="Li P.W."/>
            <person name="Liao G."/>
            <person name="Miranda A."/>
            <person name="Mungall C.J."/>
            <person name="Nunoo J."/>
            <person name="Pacleb J.M."/>
            <person name="Paragas V."/>
            <person name="Park S."/>
            <person name="Patel S."/>
            <person name="Phouanenavong S."/>
            <person name="Wan K.H."/>
            <person name="Yu C."/>
            <person name="Lewis S.E."/>
            <person name="Rubin G.M."/>
            <person name="Celniker S.E."/>
        </authorList>
    </citation>
    <scope>NUCLEOTIDE SEQUENCE [LARGE SCALE MRNA]</scope>
    <source>
        <strain>Berkeley</strain>
        <tissue>Embryo</tissue>
    </source>
</reference>
<proteinExistence type="evidence at transcript level"/>
<keyword id="KW-1003">Cell membrane</keyword>
<keyword id="KW-0342">GTP-binding</keyword>
<keyword id="KW-0449">Lipoprotein</keyword>
<keyword id="KW-0472">Membrane</keyword>
<keyword id="KW-0488">Methylation</keyword>
<keyword id="KW-0547">Nucleotide-binding</keyword>
<keyword id="KW-0636">Prenylation</keyword>
<keyword id="KW-1185">Reference proteome</keyword>
<gene>
    <name type="primary">RhoL</name>
    <name type="synonym">Drac3</name>
    <name type="ORF">CG9366</name>
</gene>
<protein>
    <recommendedName>
        <fullName>Ras-like GTP-binding protein RhoL</fullName>
    </recommendedName>
</protein>
<sequence length="190" mass="21880">MTANITKSPRPLKITIVGDGMVGKTCMLITYTRNEFPEEYIPTVFDNHACNIAVDDRDYNLTLWDTAGQEDYERLRPLSYPSTNCFLLCYSISSRTSFENVKSKWWPEIRHFSAHVPVVLVGTKLDLRIPNSEKFVTTQEGKKMRKEIHAFNLVECSAKKKQNLQQVFEEAVRAVERKPKTTSKQSCKIL</sequence>
<feature type="chain" id="PRO_0000198886" description="Ras-like GTP-binding protein RhoL">
    <location>
        <begin position="1"/>
        <end position="187"/>
    </location>
</feature>
<feature type="propeptide" id="PRO_0000281239" description="Removed in mature form" evidence="1">
    <location>
        <begin position="188"/>
        <end position="190"/>
    </location>
</feature>
<feature type="short sequence motif" description="Effector region" evidence="2">
    <location>
        <begin position="40"/>
        <end position="48"/>
    </location>
</feature>
<feature type="binding site" evidence="1">
    <location>
        <begin position="18"/>
        <end position="25"/>
    </location>
    <ligand>
        <name>GTP</name>
        <dbReference type="ChEBI" id="CHEBI:37565"/>
    </ligand>
</feature>
<feature type="binding site" evidence="1">
    <location>
        <begin position="65"/>
        <end position="69"/>
    </location>
    <ligand>
        <name>GTP</name>
        <dbReference type="ChEBI" id="CHEBI:37565"/>
    </ligand>
</feature>
<feature type="binding site" evidence="1">
    <location>
        <begin position="123"/>
        <end position="126"/>
    </location>
    <ligand>
        <name>GTP</name>
        <dbReference type="ChEBI" id="CHEBI:37565"/>
    </ligand>
</feature>
<feature type="modified residue" description="Cysteine methyl ester" evidence="1">
    <location>
        <position position="187"/>
    </location>
</feature>
<feature type="lipid moiety-binding region" description="S-geranylgeranyl cysteine" evidence="1">
    <location>
        <position position="187"/>
    </location>
</feature>
<feature type="sequence conflict" description="In Ref. 2; BAA87881." evidence="5" ref="2">
    <original>N</original>
    <variation>S</variation>
    <location>
        <position position="131"/>
    </location>
</feature>
<comment type="function">
    <text evidence="4">Essential for the maturation of hemocytes.</text>
</comment>
<comment type="subcellular location">
    <subcellularLocation>
        <location evidence="5">Cell membrane</location>
        <topology evidence="5">Lipid-anchor</topology>
        <orientation evidence="5">Cytoplasmic side</orientation>
    </subcellularLocation>
</comment>
<comment type="tissue specificity">
    <text evidence="4">Highly expressed in the embryonic cephalic mesoderm starting from stage 6 and fading by stage 11. Hemocyte precursor cells.</text>
</comment>
<comment type="developmental stage">
    <text evidence="3">Expressed at all stages of development.</text>
</comment>
<comment type="disruption phenotype">
    <text evidence="4">Hemocyte precursor cells start to differentiate normally, but never develop into mature hemocytes.</text>
</comment>
<comment type="similarity">
    <text evidence="5">Belongs to the small GTPase superfamily. Rho family.</text>
</comment>
<dbReference type="EMBL" id="U50314">
    <property type="protein sequence ID" value="AAB05666.1"/>
    <property type="molecule type" value="mRNA"/>
</dbReference>
<dbReference type="EMBL" id="AB035355">
    <property type="protein sequence ID" value="BAA87881.1"/>
    <property type="molecule type" value="mRNA"/>
</dbReference>
<dbReference type="EMBL" id="AE014297">
    <property type="protein sequence ID" value="AAF54385.1"/>
    <property type="molecule type" value="Genomic_DNA"/>
</dbReference>
<dbReference type="EMBL" id="AY069811">
    <property type="protein sequence ID" value="AAL39956.1"/>
    <property type="molecule type" value="mRNA"/>
</dbReference>
<dbReference type="RefSeq" id="NP_524292.1">
    <property type="nucleotide sequence ID" value="NM_079568.3"/>
</dbReference>
<dbReference type="SMR" id="Q24192"/>
<dbReference type="BioGRID" id="66297">
    <property type="interactions" value="4"/>
</dbReference>
<dbReference type="FunCoup" id="Q24192">
    <property type="interactions" value="257"/>
</dbReference>
<dbReference type="IntAct" id="Q24192">
    <property type="interactions" value="7"/>
</dbReference>
<dbReference type="STRING" id="7227.FBpp0293883"/>
<dbReference type="PaxDb" id="7227-FBpp0293883"/>
<dbReference type="DNASU" id="41136"/>
<dbReference type="EnsemblMetazoa" id="FBtr0082124">
    <property type="protein sequence ID" value="FBpp0081602"/>
    <property type="gene ID" value="FBgn0014380"/>
</dbReference>
<dbReference type="GeneID" id="41136"/>
<dbReference type="KEGG" id="dme:Dmel_CG9366"/>
<dbReference type="UCSC" id="CG9366-RA">
    <property type="organism name" value="d. melanogaster"/>
</dbReference>
<dbReference type="AGR" id="FB:FBgn0014380"/>
<dbReference type="CTD" id="562845"/>
<dbReference type="FlyBase" id="FBgn0014380">
    <property type="gene designation" value="RhoL"/>
</dbReference>
<dbReference type="VEuPathDB" id="VectorBase:FBgn0014380"/>
<dbReference type="eggNOG" id="KOG0393">
    <property type="taxonomic scope" value="Eukaryota"/>
</dbReference>
<dbReference type="HOGENOM" id="CLU_041217_21_3_1"/>
<dbReference type="InParanoid" id="Q24192"/>
<dbReference type="OMA" id="ENVIHKW"/>
<dbReference type="OrthoDB" id="8830751at2759"/>
<dbReference type="PhylomeDB" id="Q24192"/>
<dbReference type="SignaLink" id="Q24192"/>
<dbReference type="BioGRID-ORCS" id="41136">
    <property type="hits" value="0 hits in 1 CRISPR screen"/>
</dbReference>
<dbReference type="GenomeRNAi" id="41136"/>
<dbReference type="PRO" id="PR:Q24192"/>
<dbReference type="Proteomes" id="UP000000803">
    <property type="component" value="Chromosome 3R"/>
</dbReference>
<dbReference type="Bgee" id="FBgn0014380">
    <property type="expression patterns" value="Expressed in adult posterior midgut class II enteroendocrine cell in adult midgut (Drosophila) and 121 other cell types or tissues"/>
</dbReference>
<dbReference type="ExpressionAtlas" id="Q24192">
    <property type="expression patterns" value="baseline and differential"/>
</dbReference>
<dbReference type="GO" id="GO:0042995">
    <property type="term" value="C:cell projection"/>
    <property type="evidence" value="ECO:0000318"/>
    <property type="project" value="GO_Central"/>
</dbReference>
<dbReference type="GO" id="GO:0031410">
    <property type="term" value="C:cytoplasmic vesicle"/>
    <property type="evidence" value="ECO:0000318"/>
    <property type="project" value="GO_Central"/>
</dbReference>
<dbReference type="GO" id="GO:0005856">
    <property type="term" value="C:cytoskeleton"/>
    <property type="evidence" value="ECO:0000318"/>
    <property type="project" value="GO_Central"/>
</dbReference>
<dbReference type="GO" id="GO:0005886">
    <property type="term" value="C:plasma membrane"/>
    <property type="evidence" value="ECO:0000318"/>
    <property type="project" value="GO_Central"/>
</dbReference>
<dbReference type="GO" id="GO:0005525">
    <property type="term" value="F:GTP binding"/>
    <property type="evidence" value="ECO:0000318"/>
    <property type="project" value="GO_Central"/>
</dbReference>
<dbReference type="GO" id="GO:0003924">
    <property type="term" value="F:GTPase activity"/>
    <property type="evidence" value="ECO:0000250"/>
    <property type="project" value="FlyBase"/>
</dbReference>
<dbReference type="GO" id="GO:0019901">
    <property type="term" value="F:protein kinase binding"/>
    <property type="evidence" value="ECO:0000318"/>
    <property type="project" value="GO_Central"/>
</dbReference>
<dbReference type="GO" id="GO:0007015">
    <property type="term" value="P:actin filament organization"/>
    <property type="evidence" value="ECO:0000318"/>
    <property type="project" value="GO_Central"/>
</dbReference>
<dbReference type="GO" id="GO:0007298">
    <property type="term" value="P:border follicle cell migration"/>
    <property type="evidence" value="ECO:0000315"/>
    <property type="project" value="FlyBase"/>
</dbReference>
<dbReference type="GO" id="GO:0060326">
    <property type="term" value="P:cell chemotaxis"/>
    <property type="evidence" value="ECO:0000318"/>
    <property type="project" value="GO_Central"/>
</dbReference>
<dbReference type="GO" id="GO:0030031">
    <property type="term" value="P:cell projection assembly"/>
    <property type="evidence" value="ECO:0000318"/>
    <property type="project" value="GO_Central"/>
</dbReference>
<dbReference type="GO" id="GO:0030865">
    <property type="term" value="P:cortical cytoskeleton organization"/>
    <property type="evidence" value="ECO:0000318"/>
    <property type="project" value="GO_Central"/>
</dbReference>
<dbReference type="GO" id="GO:0007163">
    <property type="term" value="P:establishment or maintenance of cell polarity"/>
    <property type="evidence" value="ECO:0000318"/>
    <property type="project" value="GO_Central"/>
</dbReference>
<dbReference type="GO" id="GO:0007516">
    <property type="term" value="P:hemocyte development"/>
    <property type="evidence" value="ECO:0000315"/>
    <property type="project" value="UniProtKB"/>
</dbReference>
<dbReference type="GO" id="GO:0035099">
    <property type="term" value="P:hemocyte migration"/>
    <property type="evidence" value="ECO:0000315"/>
    <property type="project" value="FlyBase"/>
</dbReference>
<dbReference type="GO" id="GO:0035011">
    <property type="term" value="P:melanotic encapsulation of foreign target"/>
    <property type="evidence" value="ECO:0000315"/>
    <property type="project" value="FlyBase"/>
</dbReference>
<dbReference type="GO" id="GO:0007498">
    <property type="term" value="P:mesoderm development"/>
    <property type="evidence" value="ECO:0000270"/>
    <property type="project" value="FlyBase"/>
</dbReference>
<dbReference type="GO" id="GO:0008045">
    <property type="term" value="P:motor neuron axon guidance"/>
    <property type="evidence" value="ECO:0000318"/>
    <property type="project" value="GO_Central"/>
</dbReference>
<dbReference type="GO" id="GO:0022409">
    <property type="term" value="P:positive regulation of cell-cell adhesion"/>
    <property type="evidence" value="ECO:0000315"/>
    <property type="project" value="FlyBase"/>
</dbReference>
<dbReference type="GO" id="GO:0016601">
    <property type="term" value="P:Rac protein signal transduction"/>
    <property type="evidence" value="ECO:0000318"/>
    <property type="project" value="GO_Central"/>
</dbReference>
<dbReference type="GO" id="GO:0032956">
    <property type="term" value="P:regulation of actin cytoskeleton organization"/>
    <property type="evidence" value="ECO:0000318"/>
    <property type="project" value="GO_Central"/>
</dbReference>
<dbReference type="GO" id="GO:0008360">
    <property type="term" value="P:regulation of cell shape"/>
    <property type="evidence" value="ECO:0000318"/>
    <property type="project" value="GO_Central"/>
</dbReference>
<dbReference type="CDD" id="cd00157">
    <property type="entry name" value="Rho"/>
    <property type="match status" value="1"/>
</dbReference>
<dbReference type="FunFam" id="3.40.50.300:FF:000118">
    <property type="entry name" value="Rho-related GTP-binding protein RhoG"/>
    <property type="match status" value="1"/>
</dbReference>
<dbReference type="Gene3D" id="3.40.50.300">
    <property type="entry name" value="P-loop containing nucleotide triphosphate hydrolases"/>
    <property type="match status" value="1"/>
</dbReference>
<dbReference type="InterPro" id="IPR027417">
    <property type="entry name" value="P-loop_NTPase"/>
</dbReference>
<dbReference type="InterPro" id="IPR005225">
    <property type="entry name" value="Small_GTP-bd"/>
</dbReference>
<dbReference type="InterPro" id="IPR001806">
    <property type="entry name" value="Small_GTPase"/>
</dbReference>
<dbReference type="InterPro" id="IPR003578">
    <property type="entry name" value="Small_GTPase_Rho"/>
</dbReference>
<dbReference type="NCBIfam" id="TIGR00231">
    <property type="entry name" value="small_GTP"/>
    <property type="match status" value="1"/>
</dbReference>
<dbReference type="PANTHER" id="PTHR24072">
    <property type="entry name" value="RHO FAMILY GTPASE"/>
    <property type="match status" value="1"/>
</dbReference>
<dbReference type="Pfam" id="PF00071">
    <property type="entry name" value="Ras"/>
    <property type="match status" value="1"/>
</dbReference>
<dbReference type="PRINTS" id="PR00449">
    <property type="entry name" value="RASTRNSFRMNG"/>
</dbReference>
<dbReference type="SMART" id="SM00175">
    <property type="entry name" value="RAB"/>
    <property type="match status" value="1"/>
</dbReference>
<dbReference type="SMART" id="SM00173">
    <property type="entry name" value="RAS"/>
    <property type="match status" value="1"/>
</dbReference>
<dbReference type="SMART" id="SM00174">
    <property type="entry name" value="RHO"/>
    <property type="match status" value="1"/>
</dbReference>
<dbReference type="SUPFAM" id="SSF52540">
    <property type="entry name" value="P-loop containing nucleoside triphosphate hydrolases"/>
    <property type="match status" value="1"/>
</dbReference>
<dbReference type="PROSITE" id="PS51420">
    <property type="entry name" value="RHO"/>
    <property type="match status" value="1"/>
</dbReference>
<accession>Q24192</accession>
<accession>Q541G3</accession>
<accession>Q9U5D4</accession>
<accession>Q9VHC9</accession>